<comment type="similarity">
    <text evidence="1">Belongs to the UPF0725 (EMB2204) family.</text>
</comment>
<comment type="sequence caution" evidence="1">
    <conflict type="erroneous gene model prediction">
        <sequence resource="EMBL-CDS" id="AAD12038"/>
    </conflict>
</comment>
<evidence type="ECO:0000305" key="1"/>
<organism>
    <name type="scientific">Arabidopsis thaliana</name>
    <name type="common">Mouse-ear cress</name>
    <dbReference type="NCBI Taxonomy" id="3702"/>
    <lineage>
        <taxon>Eukaryota</taxon>
        <taxon>Viridiplantae</taxon>
        <taxon>Streptophyta</taxon>
        <taxon>Embryophyta</taxon>
        <taxon>Tracheophyta</taxon>
        <taxon>Spermatophyta</taxon>
        <taxon>Magnoliopsida</taxon>
        <taxon>eudicotyledons</taxon>
        <taxon>Gunneridae</taxon>
        <taxon>Pentapetalae</taxon>
        <taxon>rosids</taxon>
        <taxon>malvids</taxon>
        <taxon>Brassicales</taxon>
        <taxon>Brassicaceae</taxon>
        <taxon>Camelineae</taxon>
        <taxon>Arabidopsis</taxon>
    </lineage>
</organism>
<accession>Q84J62</accession>
<accession>O64484</accession>
<name>Y2920_ARATH</name>
<gene>
    <name type="ordered locus">At2g19200</name>
    <name type="ORF">T20K24.25</name>
</gene>
<protein>
    <recommendedName>
        <fullName>UPF0725 protein At2g19200</fullName>
    </recommendedName>
</protein>
<feature type="chain" id="PRO_0000363129" description="UPF0725 protein At2g19200">
    <location>
        <begin position="1"/>
        <end position="169"/>
    </location>
</feature>
<proteinExistence type="evidence at transcript level"/>
<sequence>MLVSLIPELPLENPFQDATDRFYVLPRLIGTVSNMVWPIKILRVAMETTQDLGACDATFYVRYTDSCQARTGEDADRVAIVRRIWDEQFDVFKIVGRTESYRSLGNGESTTSRETVVHCSKDIDSMEQSDMHDGFDGYVGLYSELTNLGSWLVVIHLNMLIRIVNPIAC</sequence>
<reference key="1">
    <citation type="journal article" date="1999" name="Nature">
        <title>Sequence and analysis of chromosome 2 of the plant Arabidopsis thaliana.</title>
        <authorList>
            <person name="Lin X."/>
            <person name="Kaul S."/>
            <person name="Rounsley S.D."/>
            <person name="Shea T.P."/>
            <person name="Benito M.-I."/>
            <person name="Town C.D."/>
            <person name="Fujii C.Y."/>
            <person name="Mason T.M."/>
            <person name="Bowman C.L."/>
            <person name="Barnstead M.E."/>
            <person name="Feldblyum T.V."/>
            <person name="Buell C.R."/>
            <person name="Ketchum K.A."/>
            <person name="Lee J.J."/>
            <person name="Ronning C.M."/>
            <person name="Koo H.L."/>
            <person name="Moffat K.S."/>
            <person name="Cronin L.A."/>
            <person name="Shen M."/>
            <person name="Pai G."/>
            <person name="Van Aken S."/>
            <person name="Umayam L."/>
            <person name="Tallon L.J."/>
            <person name="Gill J.E."/>
            <person name="Adams M.D."/>
            <person name="Carrera A.J."/>
            <person name="Creasy T.H."/>
            <person name="Goodman H.M."/>
            <person name="Somerville C.R."/>
            <person name="Copenhaver G.P."/>
            <person name="Preuss D."/>
            <person name="Nierman W.C."/>
            <person name="White O."/>
            <person name="Eisen J.A."/>
            <person name="Salzberg S.L."/>
            <person name="Fraser C.M."/>
            <person name="Venter J.C."/>
        </authorList>
    </citation>
    <scope>NUCLEOTIDE SEQUENCE [LARGE SCALE GENOMIC DNA]</scope>
    <source>
        <strain>cv. Columbia</strain>
    </source>
</reference>
<reference key="2">
    <citation type="journal article" date="2017" name="Plant J.">
        <title>Araport11: a complete reannotation of the Arabidopsis thaliana reference genome.</title>
        <authorList>
            <person name="Cheng C.Y."/>
            <person name="Krishnakumar V."/>
            <person name="Chan A.P."/>
            <person name="Thibaud-Nissen F."/>
            <person name="Schobel S."/>
            <person name="Town C.D."/>
        </authorList>
    </citation>
    <scope>GENOME REANNOTATION</scope>
    <source>
        <strain>cv. Columbia</strain>
    </source>
</reference>
<reference key="3">
    <citation type="journal article" date="2005" name="Plant Physiol.">
        <title>Analysis of the cDNAs of hypothetical genes on Arabidopsis chromosome 2 reveals numerous transcript variants.</title>
        <authorList>
            <person name="Xiao Y.-L."/>
            <person name="Smith S.R."/>
            <person name="Ishmael N."/>
            <person name="Redman J.C."/>
            <person name="Kumar N."/>
            <person name="Monaghan E.L."/>
            <person name="Ayele M."/>
            <person name="Haas B.J."/>
            <person name="Wu H.C."/>
            <person name="Town C.D."/>
        </authorList>
    </citation>
    <scope>NUCLEOTIDE SEQUENCE [LARGE SCALE MRNA]</scope>
    <source>
        <strain>cv. Columbia</strain>
    </source>
</reference>
<reference key="4">
    <citation type="submission" date="2005-03" db="EMBL/GenBank/DDBJ databases">
        <authorList>
            <person name="Underwood B.A."/>
            <person name="Xiao Y.-L."/>
            <person name="Moskal W.A. Jr."/>
            <person name="Monaghan E.L."/>
            <person name="Wang W."/>
            <person name="Redman J.C."/>
            <person name="Wu H.C."/>
            <person name="Utterback T."/>
            <person name="Town C.D."/>
        </authorList>
    </citation>
    <scope>NUCLEOTIDE SEQUENCE [LARGE SCALE MRNA]</scope>
    <source>
        <strain>cv. Columbia</strain>
    </source>
</reference>
<dbReference type="EMBL" id="AC002392">
    <property type="protein sequence ID" value="AAD12038.1"/>
    <property type="status" value="ALT_SEQ"/>
    <property type="molecule type" value="Genomic_DNA"/>
</dbReference>
<dbReference type="EMBL" id="CP002685">
    <property type="status" value="NOT_ANNOTATED_CDS"/>
    <property type="molecule type" value="Genomic_DNA"/>
</dbReference>
<dbReference type="EMBL" id="AY231408">
    <property type="protein sequence ID" value="AAO86836.1"/>
    <property type="molecule type" value="mRNA"/>
</dbReference>
<dbReference type="EMBL" id="AY231409">
    <property type="protein sequence ID" value="AAO86837.1"/>
    <property type="molecule type" value="mRNA"/>
</dbReference>
<dbReference type="EMBL" id="AY954792">
    <property type="protein sequence ID" value="AAX55118.1"/>
    <property type="molecule type" value="mRNA"/>
</dbReference>
<dbReference type="PIR" id="T00541">
    <property type="entry name" value="T00541"/>
</dbReference>
<dbReference type="STRING" id="3702.Q84J62"/>
<dbReference type="Araport" id="AT2G19200"/>
<dbReference type="TAIR" id="AT2G19200"/>
<dbReference type="InParanoid" id="Q84J62"/>
<dbReference type="PhylomeDB" id="Q84J62"/>
<dbReference type="PRO" id="PR:Q84J62"/>
<dbReference type="Proteomes" id="UP000006548">
    <property type="component" value="Chromosome 2"/>
</dbReference>
<dbReference type="InterPro" id="IPR006462">
    <property type="entry name" value="MS5"/>
</dbReference>
<dbReference type="Pfam" id="PF04776">
    <property type="entry name" value="protein_MS5"/>
    <property type="match status" value="1"/>
</dbReference>
<keyword id="KW-1185">Reference proteome</keyword>